<proteinExistence type="inferred from homology"/>
<gene>
    <name evidence="1" type="primary">xerD</name>
    <name type="ordered locus">SE_1181</name>
</gene>
<evidence type="ECO:0000255" key="1">
    <source>
        <dbReference type="HAMAP-Rule" id="MF_01807"/>
    </source>
</evidence>
<evidence type="ECO:0000255" key="2">
    <source>
        <dbReference type="PROSITE-ProRule" id="PRU01246"/>
    </source>
</evidence>
<evidence type="ECO:0000255" key="3">
    <source>
        <dbReference type="PROSITE-ProRule" id="PRU01248"/>
    </source>
</evidence>
<sequence length="295" mass="34104">MNTIIEEYLNFIQIEKGLSNNTIGAYRRDLKKYKDYLEDNKISHIDFIDRQIIQECLGHLIDMGQSSKSLARFISTIRSFHQFALREKYAAKDPTVLIETPKYEKKLPDVLEIDEVIALLETPDLTKNNGYRDRTMLELLYATGMRVTEIIQLDVEDVNLIMGFVRVFGKGNKERIVPLGDTVIEYLTTYIETVRPQLLKQTTTQALFLNMHGKSLSRQGIWKIIKQYGLKANINKTLTPHTLRHSFATHLLENGADLRAVQEMLGHSDISTTQLYTHVSKSQIRKMYTQFHPRA</sequence>
<organism>
    <name type="scientific">Staphylococcus epidermidis (strain ATCC 12228 / FDA PCI 1200)</name>
    <dbReference type="NCBI Taxonomy" id="176280"/>
    <lineage>
        <taxon>Bacteria</taxon>
        <taxon>Bacillati</taxon>
        <taxon>Bacillota</taxon>
        <taxon>Bacilli</taxon>
        <taxon>Bacillales</taxon>
        <taxon>Staphylococcaceae</taxon>
        <taxon>Staphylococcus</taxon>
    </lineage>
</organism>
<name>XERD_STAES</name>
<comment type="function">
    <text evidence="1">Site-specific tyrosine recombinase, which acts by catalyzing the cutting and rejoining of the recombining DNA molecules. The XerC-XerD complex is essential to convert dimers of the bacterial chromosome into monomers to permit their segregation at cell division. It also contributes to the segregational stability of plasmids.</text>
</comment>
<comment type="subunit">
    <text evidence="1">Forms a cyclic heterotetrameric complex composed of two molecules of XerC and two molecules of XerD.</text>
</comment>
<comment type="subcellular location">
    <subcellularLocation>
        <location evidence="1">Cytoplasm</location>
    </subcellularLocation>
</comment>
<comment type="similarity">
    <text evidence="1">Belongs to the 'phage' integrase family. XerD subfamily.</text>
</comment>
<feature type="chain" id="PRO_0000095423" description="Tyrosine recombinase XerD">
    <location>
        <begin position="1"/>
        <end position="295"/>
    </location>
</feature>
<feature type="domain" description="Core-binding (CB)" evidence="3">
    <location>
        <begin position="1"/>
        <end position="85"/>
    </location>
</feature>
<feature type="domain" description="Tyr recombinase" evidence="2">
    <location>
        <begin position="106"/>
        <end position="289"/>
    </location>
</feature>
<feature type="active site" evidence="1">
    <location>
        <position position="146"/>
    </location>
</feature>
<feature type="active site" evidence="1">
    <location>
        <position position="170"/>
    </location>
</feature>
<feature type="active site" evidence="1">
    <location>
        <position position="241"/>
    </location>
</feature>
<feature type="active site" evidence="1">
    <location>
        <position position="244"/>
    </location>
</feature>
<feature type="active site" evidence="1">
    <location>
        <position position="267"/>
    </location>
</feature>
<feature type="active site" description="O-(3'-phospho-DNA)-tyrosine intermediate" evidence="1">
    <location>
        <position position="276"/>
    </location>
</feature>
<reference key="1">
    <citation type="journal article" date="2003" name="Mol. Microbiol.">
        <title>Genome-based analysis of virulence genes in a non-biofilm-forming Staphylococcus epidermidis strain (ATCC 12228).</title>
        <authorList>
            <person name="Zhang Y.-Q."/>
            <person name="Ren S.-X."/>
            <person name="Li H.-L."/>
            <person name="Wang Y.-X."/>
            <person name="Fu G."/>
            <person name="Yang J."/>
            <person name="Qin Z.-Q."/>
            <person name="Miao Y.-G."/>
            <person name="Wang W.-Y."/>
            <person name="Chen R.-S."/>
            <person name="Shen Y."/>
            <person name="Chen Z."/>
            <person name="Yuan Z.-H."/>
            <person name="Zhao G.-P."/>
            <person name="Qu D."/>
            <person name="Danchin A."/>
            <person name="Wen Y.-M."/>
        </authorList>
    </citation>
    <scope>NUCLEOTIDE SEQUENCE [LARGE SCALE GENOMIC DNA]</scope>
    <source>
        <strain>ATCC 12228 / FDA PCI 1200</strain>
    </source>
</reference>
<dbReference type="EMBL" id="AE015929">
    <property type="protein sequence ID" value="AAO04780.1"/>
    <property type="molecule type" value="Genomic_DNA"/>
</dbReference>
<dbReference type="RefSeq" id="NP_764736.1">
    <property type="nucleotide sequence ID" value="NC_004461.1"/>
</dbReference>
<dbReference type="RefSeq" id="WP_002439987.1">
    <property type="nucleotide sequence ID" value="NZ_WBME01000006.1"/>
</dbReference>
<dbReference type="SMR" id="Q7ZAJ2"/>
<dbReference type="KEGG" id="sep:SE_1181"/>
<dbReference type="PATRIC" id="fig|176280.10.peg.1152"/>
<dbReference type="eggNOG" id="COG4974">
    <property type="taxonomic scope" value="Bacteria"/>
</dbReference>
<dbReference type="HOGENOM" id="CLU_027562_9_6_9"/>
<dbReference type="OrthoDB" id="9801717at2"/>
<dbReference type="Proteomes" id="UP000001411">
    <property type="component" value="Chromosome"/>
</dbReference>
<dbReference type="GO" id="GO:0005737">
    <property type="term" value="C:cytoplasm"/>
    <property type="evidence" value="ECO:0007669"/>
    <property type="project" value="UniProtKB-SubCell"/>
</dbReference>
<dbReference type="GO" id="GO:0003677">
    <property type="term" value="F:DNA binding"/>
    <property type="evidence" value="ECO:0007669"/>
    <property type="project" value="UniProtKB-KW"/>
</dbReference>
<dbReference type="GO" id="GO:0009037">
    <property type="term" value="F:tyrosine-based site-specific recombinase activity"/>
    <property type="evidence" value="ECO:0007669"/>
    <property type="project" value="UniProtKB-UniRule"/>
</dbReference>
<dbReference type="GO" id="GO:0051301">
    <property type="term" value="P:cell division"/>
    <property type="evidence" value="ECO:0007669"/>
    <property type="project" value="UniProtKB-KW"/>
</dbReference>
<dbReference type="GO" id="GO:0007059">
    <property type="term" value="P:chromosome segregation"/>
    <property type="evidence" value="ECO:0007669"/>
    <property type="project" value="UniProtKB-UniRule"/>
</dbReference>
<dbReference type="GO" id="GO:0006313">
    <property type="term" value="P:DNA transposition"/>
    <property type="evidence" value="ECO:0007669"/>
    <property type="project" value="UniProtKB-UniRule"/>
</dbReference>
<dbReference type="CDD" id="cd00798">
    <property type="entry name" value="INT_XerDC_C"/>
    <property type="match status" value="1"/>
</dbReference>
<dbReference type="Gene3D" id="1.10.150.130">
    <property type="match status" value="1"/>
</dbReference>
<dbReference type="Gene3D" id="1.10.443.10">
    <property type="entry name" value="Intergrase catalytic core"/>
    <property type="match status" value="1"/>
</dbReference>
<dbReference type="HAMAP" id="MF_01808">
    <property type="entry name" value="Recomb_XerC_XerD"/>
    <property type="match status" value="1"/>
</dbReference>
<dbReference type="HAMAP" id="MF_01807">
    <property type="entry name" value="Recomb_XerD"/>
    <property type="match status" value="1"/>
</dbReference>
<dbReference type="InterPro" id="IPR044068">
    <property type="entry name" value="CB"/>
</dbReference>
<dbReference type="InterPro" id="IPR011010">
    <property type="entry name" value="DNA_brk_join_enz"/>
</dbReference>
<dbReference type="InterPro" id="IPR013762">
    <property type="entry name" value="Integrase-like_cat_sf"/>
</dbReference>
<dbReference type="InterPro" id="IPR002104">
    <property type="entry name" value="Integrase_catalytic"/>
</dbReference>
<dbReference type="InterPro" id="IPR010998">
    <property type="entry name" value="Integrase_recombinase_N"/>
</dbReference>
<dbReference type="InterPro" id="IPR004107">
    <property type="entry name" value="Integrase_SAM-like_N"/>
</dbReference>
<dbReference type="InterPro" id="IPR011932">
    <property type="entry name" value="Recomb_XerD"/>
</dbReference>
<dbReference type="InterPro" id="IPR023009">
    <property type="entry name" value="Tyrosine_recombinase_XerC/XerD"/>
</dbReference>
<dbReference type="InterPro" id="IPR050090">
    <property type="entry name" value="Tyrosine_recombinase_XerCD"/>
</dbReference>
<dbReference type="NCBIfam" id="NF001399">
    <property type="entry name" value="PRK00283.1"/>
    <property type="match status" value="1"/>
</dbReference>
<dbReference type="NCBIfam" id="NF040815">
    <property type="entry name" value="recomb_XerA_Arch"/>
    <property type="match status" value="1"/>
</dbReference>
<dbReference type="NCBIfam" id="TIGR02225">
    <property type="entry name" value="recomb_XerD"/>
    <property type="match status" value="1"/>
</dbReference>
<dbReference type="PANTHER" id="PTHR30349">
    <property type="entry name" value="PHAGE INTEGRASE-RELATED"/>
    <property type="match status" value="1"/>
</dbReference>
<dbReference type="PANTHER" id="PTHR30349:SF81">
    <property type="entry name" value="TYROSINE RECOMBINASE XERC"/>
    <property type="match status" value="1"/>
</dbReference>
<dbReference type="Pfam" id="PF02899">
    <property type="entry name" value="Phage_int_SAM_1"/>
    <property type="match status" value="1"/>
</dbReference>
<dbReference type="Pfam" id="PF00589">
    <property type="entry name" value="Phage_integrase"/>
    <property type="match status" value="1"/>
</dbReference>
<dbReference type="SUPFAM" id="SSF56349">
    <property type="entry name" value="DNA breaking-rejoining enzymes"/>
    <property type="match status" value="1"/>
</dbReference>
<dbReference type="PROSITE" id="PS51900">
    <property type="entry name" value="CB"/>
    <property type="match status" value="1"/>
</dbReference>
<dbReference type="PROSITE" id="PS51898">
    <property type="entry name" value="TYR_RECOMBINASE"/>
    <property type="match status" value="1"/>
</dbReference>
<keyword id="KW-0131">Cell cycle</keyword>
<keyword id="KW-0132">Cell division</keyword>
<keyword id="KW-0159">Chromosome partition</keyword>
<keyword id="KW-0963">Cytoplasm</keyword>
<keyword id="KW-0229">DNA integration</keyword>
<keyword id="KW-0233">DNA recombination</keyword>
<keyword id="KW-0238">DNA-binding</keyword>
<protein>
    <recommendedName>
        <fullName evidence="1">Tyrosine recombinase XerD</fullName>
    </recommendedName>
</protein>
<accession>Q7ZAJ2</accession>